<evidence type="ECO:0000255" key="1">
    <source>
        <dbReference type="HAMAP-Rule" id="MF_00406"/>
    </source>
</evidence>
<gene>
    <name evidence="1" type="primary">fabZ</name>
    <name type="ordered locus">Mlg_1853</name>
</gene>
<protein>
    <recommendedName>
        <fullName evidence="1">3-hydroxyacyl-[acyl-carrier-protein] dehydratase FabZ</fullName>
        <ecNumber evidence="1">4.2.1.59</ecNumber>
    </recommendedName>
    <alternativeName>
        <fullName evidence="1">(3R)-hydroxymyristoyl-[acyl-carrier-protein] dehydratase</fullName>
        <shortName evidence="1">(3R)-hydroxymyristoyl-ACP dehydrase</shortName>
    </alternativeName>
    <alternativeName>
        <fullName evidence="1">Beta-hydroxyacyl-ACP dehydratase</fullName>
    </alternativeName>
</protein>
<sequence length="155" mass="17422">MNASTETSIALPDINDIMRNLPHRYPMLLIDRVVAFSKRERLVGIKNVTINEPYFAGHFPQKPVMPGVLILESMAQACGMLAFKSEQEELGGNHIIYLVAIDKARFKRPVEPGDQLRLEASLKRVMRGLWMFQAQAWVGDALAAEAEIRCTVKEA</sequence>
<reference key="1">
    <citation type="submission" date="2006-08" db="EMBL/GenBank/DDBJ databases">
        <title>Complete sequence of Alkalilimnicola ehrilichei MLHE-1.</title>
        <authorList>
            <person name="Copeland A."/>
            <person name="Lucas S."/>
            <person name="Lapidus A."/>
            <person name="Barry K."/>
            <person name="Detter J.C."/>
            <person name="Glavina del Rio T."/>
            <person name="Hammon N."/>
            <person name="Israni S."/>
            <person name="Dalin E."/>
            <person name="Tice H."/>
            <person name="Pitluck S."/>
            <person name="Sims D."/>
            <person name="Brettin T."/>
            <person name="Bruce D."/>
            <person name="Han C."/>
            <person name="Tapia R."/>
            <person name="Gilna P."/>
            <person name="Schmutz J."/>
            <person name="Larimer F."/>
            <person name="Land M."/>
            <person name="Hauser L."/>
            <person name="Kyrpides N."/>
            <person name="Mikhailova N."/>
            <person name="Oremland R.S."/>
            <person name="Hoeft S.E."/>
            <person name="Switzer-Blum J."/>
            <person name="Kulp T."/>
            <person name="King G."/>
            <person name="Tabita R."/>
            <person name="Witte B."/>
            <person name="Santini J.M."/>
            <person name="Basu P."/>
            <person name="Hollibaugh J.T."/>
            <person name="Xie G."/>
            <person name="Stolz J.F."/>
            <person name="Richardson P."/>
        </authorList>
    </citation>
    <scope>NUCLEOTIDE SEQUENCE [LARGE SCALE GENOMIC DNA]</scope>
    <source>
        <strain>ATCC BAA-1101 / DSM 17681 / MLHE-1</strain>
    </source>
</reference>
<comment type="function">
    <text evidence="1">Involved in unsaturated fatty acids biosynthesis. Catalyzes the dehydration of short chain beta-hydroxyacyl-ACPs and long chain saturated and unsaturated beta-hydroxyacyl-ACPs.</text>
</comment>
<comment type="catalytic activity">
    <reaction evidence="1">
        <text>a (3R)-hydroxyacyl-[ACP] = a (2E)-enoyl-[ACP] + H2O</text>
        <dbReference type="Rhea" id="RHEA:13097"/>
        <dbReference type="Rhea" id="RHEA-COMP:9925"/>
        <dbReference type="Rhea" id="RHEA-COMP:9945"/>
        <dbReference type="ChEBI" id="CHEBI:15377"/>
        <dbReference type="ChEBI" id="CHEBI:78784"/>
        <dbReference type="ChEBI" id="CHEBI:78827"/>
        <dbReference type="EC" id="4.2.1.59"/>
    </reaction>
</comment>
<comment type="subcellular location">
    <subcellularLocation>
        <location evidence="1">Cytoplasm</location>
    </subcellularLocation>
</comment>
<comment type="similarity">
    <text evidence="1">Belongs to the thioester dehydratase family. FabZ subfamily.</text>
</comment>
<accession>Q0A7J0</accession>
<feature type="chain" id="PRO_0000340755" description="3-hydroxyacyl-[acyl-carrier-protein] dehydratase FabZ">
    <location>
        <begin position="1"/>
        <end position="155"/>
    </location>
</feature>
<feature type="active site" evidence="1">
    <location>
        <position position="58"/>
    </location>
</feature>
<proteinExistence type="inferred from homology"/>
<dbReference type="EC" id="4.2.1.59" evidence="1"/>
<dbReference type="EMBL" id="CP000453">
    <property type="protein sequence ID" value="ABI57197.1"/>
    <property type="molecule type" value="Genomic_DNA"/>
</dbReference>
<dbReference type="RefSeq" id="WP_011629591.1">
    <property type="nucleotide sequence ID" value="NC_008340.1"/>
</dbReference>
<dbReference type="SMR" id="Q0A7J0"/>
<dbReference type="KEGG" id="aeh:Mlg_1853"/>
<dbReference type="eggNOG" id="COG0764">
    <property type="taxonomic scope" value="Bacteria"/>
</dbReference>
<dbReference type="HOGENOM" id="CLU_078912_1_0_6"/>
<dbReference type="OrthoDB" id="9786735at2"/>
<dbReference type="Proteomes" id="UP000001962">
    <property type="component" value="Chromosome"/>
</dbReference>
<dbReference type="GO" id="GO:0005737">
    <property type="term" value="C:cytoplasm"/>
    <property type="evidence" value="ECO:0007669"/>
    <property type="project" value="UniProtKB-SubCell"/>
</dbReference>
<dbReference type="GO" id="GO:0016020">
    <property type="term" value="C:membrane"/>
    <property type="evidence" value="ECO:0007669"/>
    <property type="project" value="GOC"/>
</dbReference>
<dbReference type="GO" id="GO:0019171">
    <property type="term" value="F:(3R)-hydroxyacyl-[acyl-carrier-protein] dehydratase activity"/>
    <property type="evidence" value="ECO:0007669"/>
    <property type="project" value="UniProtKB-EC"/>
</dbReference>
<dbReference type="GO" id="GO:0006633">
    <property type="term" value="P:fatty acid biosynthetic process"/>
    <property type="evidence" value="ECO:0007669"/>
    <property type="project" value="UniProtKB-UniRule"/>
</dbReference>
<dbReference type="GO" id="GO:0009245">
    <property type="term" value="P:lipid A biosynthetic process"/>
    <property type="evidence" value="ECO:0007669"/>
    <property type="project" value="UniProtKB-UniRule"/>
</dbReference>
<dbReference type="CDD" id="cd01288">
    <property type="entry name" value="FabZ"/>
    <property type="match status" value="1"/>
</dbReference>
<dbReference type="FunFam" id="3.10.129.10:FF:000001">
    <property type="entry name" value="3-hydroxyacyl-[acyl-carrier-protein] dehydratase FabZ"/>
    <property type="match status" value="1"/>
</dbReference>
<dbReference type="Gene3D" id="3.10.129.10">
    <property type="entry name" value="Hotdog Thioesterase"/>
    <property type="match status" value="1"/>
</dbReference>
<dbReference type="HAMAP" id="MF_00406">
    <property type="entry name" value="FabZ"/>
    <property type="match status" value="1"/>
</dbReference>
<dbReference type="InterPro" id="IPR013114">
    <property type="entry name" value="FabA_FabZ"/>
</dbReference>
<dbReference type="InterPro" id="IPR010084">
    <property type="entry name" value="FabZ"/>
</dbReference>
<dbReference type="InterPro" id="IPR029069">
    <property type="entry name" value="HotDog_dom_sf"/>
</dbReference>
<dbReference type="NCBIfam" id="TIGR01750">
    <property type="entry name" value="fabZ"/>
    <property type="match status" value="1"/>
</dbReference>
<dbReference type="NCBIfam" id="NF000582">
    <property type="entry name" value="PRK00006.1"/>
    <property type="match status" value="1"/>
</dbReference>
<dbReference type="PANTHER" id="PTHR30272">
    <property type="entry name" value="3-HYDROXYACYL-[ACYL-CARRIER-PROTEIN] DEHYDRATASE"/>
    <property type="match status" value="1"/>
</dbReference>
<dbReference type="PANTHER" id="PTHR30272:SF1">
    <property type="entry name" value="3-HYDROXYACYL-[ACYL-CARRIER-PROTEIN] DEHYDRATASE"/>
    <property type="match status" value="1"/>
</dbReference>
<dbReference type="Pfam" id="PF07977">
    <property type="entry name" value="FabA"/>
    <property type="match status" value="1"/>
</dbReference>
<dbReference type="SUPFAM" id="SSF54637">
    <property type="entry name" value="Thioesterase/thiol ester dehydrase-isomerase"/>
    <property type="match status" value="1"/>
</dbReference>
<name>FABZ_ALKEH</name>
<organism>
    <name type="scientific">Alkalilimnicola ehrlichii (strain ATCC BAA-1101 / DSM 17681 / MLHE-1)</name>
    <dbReference type="NCBI Taxonomy" id="187272"/>
    <lineage>
        <taxon>Bacteria</taxon>
        <taxon>Pseudomonadati</taxon>
        <taxon>Pseudomonadota</taxon>
        <taxon>Gammaproteobacteria</taxon>
        <taxon>Chromatiales</taxon>
        <taxon>Ectothiorhodospiraceae</taxon>
        <taxon>Alkalilimnicola</taxon>
    </lineage>
</organism>
<keyword id="KW-0963">Cytoplasm</keyword>
<keyword id="KW-0441">Lipid A biosynthesis</keyword>
<keyword id="KW-0444">Lipid biosynthesis</keyword>
<keyword id="KW-0443">Lipid metabolism</keyword>
<keyword id="KW-0456">Lyase</keyword>
<keyword id="KW-1185">Reference proteome</keyword>